<organism>
    <name type="scientific">Drosophila melanogaster</name>
    <name type="common">Fruit fly</name>
    <dbReference type="NCBI Taxonomy" id="7227"/>
    <lineage>
        <taxon>Eukaryota</taxon>
        <taxon>Metazoa</taxon>
        <taxon>Ecdysozoa</taxon>
        <taxon>Arthropoda</taxon>
        <taxon>Hexapoda</taxon>
        <taxon>Insecta</taxon>
        <taxon>Pterygota</taxon>
        <taxon>Neoptera</taxon>
        <taxon>Endopterygota</taxon>
        <taxon>Diptera</taxon>
        <taxon>Brachycera</taxon>
        <taxon>Muscomorpha</taxon>
        <taxon>Ephydroidea</taxon>
        <taxon>Drosophilidae</taxon>
        <taxon>Drosophila</taxon>
        <taxon>Sophophora</taxon>
    </lineage>
</organism>
<comment type="function">
    <text evidence="1">Probable E3 ubiquitin-protein ligase which accepts ubiquitin from an E2 ubiquitin-conjugating enzyme in the form of a thioester and then directly transfers the ubiquitin to targeted substrates.</text>
</comment>
<comment type="catalytic activity">
    <reaction>
        <text>S-ubiquitinyl-[E2 ubiquitin-conjugating enzyme]-L-cysteine + [acceptor protein]-L-lysine = [E2 ubiquitin-conjugating enzyme]-L-cysteine + N(6)-ubiquitinyl-[acceptor protein]-L-lysine.</text>
        <dbReference type="EC" id="2.3.2.26"/>
    </reaction>
</comment>
<comment type="pathway">
    <text>Protein modification; protein ubiquitination.</text>
</comment>
<comment type="subcellular location">
    <subcellularLocation>
        <location evidence="1">Cytoplasm</location>
        <location evidence="1">Cytoskeleton</location>
        <location evidence="1">Microtubule organizing center</location>
        <location evidence="1">Centrosome</location>
        <location evidence="1">Centriole</location>
    </subcellularLocation>
</comment>
<comment type="alternative products">
    <event type="alternative splicing"/>
    <isoform>
        <id>Q9VR91-1</id>
        <name evidence="8">B</name>
        <sequence type="displayed"/>
    </isoform>
    <isoform>
        <id>Q9VR91-2</id>
        <name evidence="9">A</name>
        <sequence type="described" ref="VSP_051976 VSP_051977"/>
    </isoform>
</comment>
<reference key="1">
    <citation type="journal article" date="2000" name="Science">
        <title>The genome sequence of Drosophila melanogaster.</title>
        <authorList>
            <person name="Adams M.D."/>
            <person name="Celniker S.E."/>
            <person name="Holt R.A."/>
            <person name="Evans C.A."/>
            <person name="Gocayne J.D."/>
            <person name="Amanatides P.G."/>
            <person name="Scherer S.E."/>
            <person name="Li P.W."/>
            <person name="Hoskins R.A."/>
            <person name="Galle R.F."/>
            <person name="George R.A."/>
            <person name="Lewis S.E."/>
            <person name="Richards S."/>
            <person name="Ashburner M."/>
            <person name="Henderson S.N."/>
            <person name="Sutton G.G."/>
            <person name="Wortman J.R."/>
            <person name="Yandell M.D."/>
            <person name="Zhang Q."/>
            <person name="Chen L.X."/>
            <person name="Brandon R.C."/>
            <person name="Rogers Y.-H.C."/>
            <person name="Blazej R.G."/>
            <person name="Champe M."/>
            <person name="Pfeiffer B.D."/>
            <person name="Wan K.H."/>
            <person name="Doyle C."/>
            <person name="Baxter E.G."/>
            <person name="Helt G."/>
            <person name="Nelson C.R."/>
            <person name="Miklos G.L.G."/>
            <person name="Abril J.F."/>
            <person name="Agbayani A."/>
            <person name="An H.-J."/>
            <person name="Andrews-Pfannkoch C."/>
            <person name="Baldwin D."/>
            <person name="Ballew R.M."/>
            <person name="Basu A."/>
            <person name="Baxendale J."/>
            <person name="Bayraktaroglu L."/>
            <person name="Beasley E.M."/>
            <person name="Beeson K.Y."/>
            <person name="Benos P.V."/>
            <person name="Berman B.P."/>
            <person name="Bhandari D."/>
            <person name="Bolshakov S."/>
            <person name="Borkova D."/>
            <person name="Botchan M.R."/>
            <person name="Bouck J."/>
            <person name="Brokstein P."/>
            <person name="Brottier P."/>
            <person name="Burtis K.C."/>
            <person name="Busam D.A."/>
            <person name="Butler H."/>
            <person name="Cadieu E."/>
            <person name="Center A."/>
            <person name="Chandra I."/>
            <person name="Cherry J.M."/>
            <person name="Cawley S."/>
            <person name="Dahlke C."/>
            <person name="Davenport L.B."/>
            <person name="Davies P."/>
            <person name="de Pablos B."/>
            <person name="Delcher A."/>
            <person name="Deng Z."/>
            <person name="Mays A.D."/>
            <person name="Dew I."/>
            <person name="Dietz S.M."/>
            <person name="Dodson K."/>
            <person name="Doup L.E."/>
            <person name="Downes M."/>
            <person name="Dugan-Rocha S."/>
            <person name="Dunkov B.C."/>
            <person name="Dunn P."/>
            <person name="Durbin K.J."/>
            <person name="Evangelista C.C."/>
            <person name="Ferraz C."/>
            <person name="Ferriera S."/>
            <person name="Fleischmann W."/>
            <person name="Fosler C."/>
            <person name="Gabrielian A.E."/>
            <person name="Garg N.S."/>
            <person name="Gelbart W.M."/>
            <person name="Glasser K."/>
            <person name="Glodek A."/>
            <person name="Gong F."/>
            <person name="Gorrell J.H."/>
            <person name="Gu Z."/>
            <person name="Guan P."/>
            <person name="Harris M."/>
            <person name="Harris N.L."/>
            <person name="Harvey D.A."/>
            <person name="Heiman T.J."/>
            <person name="Hernandez J.R."/>
            <person name="Houck J."/>
            <person name="Hostin D."/>
            <person name="Houston K.A."/>
            <person name="Howland T.J."/>
            <person name="Wei M.-H."/>
            <person name="Ibegwam C."/>
            <person name="Jalali M."/>
            <person name="Kalush F."/>
            <person name="Karpen G.H."/>
            <person name="Ke Z."/>
            <person name="Kennison J.A."/>
            <person name="Ketchum K.A."/>
            <person name="Kimmel B.E."/>
            <person name="Kodira C.D."/>
            <person name="Kraft C.L."/>
            <person name="Kravitz S."/>
            <person name="Kulp D."/>
            <person name="Lai Z."/>
            <person name="Lasko P."/>
            <person name="Lei Y."/>
            <person name="Levitsky A.A."/>
            <person name="Li J.H."/>
            <person name="Li Z."/>
            <person name="Liang Y."/>
            <person name="Lin X."/>
            <person name="Liu X."/>
            <person name="Mattei B."/>
            <person name="McIntosh T.C."/>
            <person name="McLeod M.P."/>
            <person name="McPherson D."/>
            <person name="Merkulov G."/>
            <person name="Milshina N.V."/>
            <person name="Mobarry C."/>
            <person name="Morris J."/>
            <person name="Moshrefi A."/>
            <person name="Mount S.M."/>
            <person name="Moy M."/>
            <person name="Murphy B."/>
            <person name="Murphy L."/>
            <person name="Muzny D.M."/>
            <person name="Nelson D.L."/>
            <person name="Nelson D.R."/>
            <person name="Nelson K.A."/>
            <person name="Nixon K."/>
            <person name="Nusskern D.R."/>
            <person name="Pacleb J.M."/>
            <person name="Palazzolo M."/>
            <person name="Pittman G.S."/>
            <person name="Pan S."/>
            <person name="Pollard J."/>
            <person name="Puri V."/>
            <person name="Reese M.G."/>
            <person name="Reinert K."/>
            <person name="Remington K."/>
            <person name="Saunders R.D.C."/>
            <person name="Scheeler F."/>
            <person name="Shen H."/>
            <person name="Shue B.C."/>
            <person name="Siden-Kiamos I."/>
            <person name="Simpson M."/>
            <person name="Skupski M.P."/>
            <person name="Smith T.J."/>
            <person name="Spier E."/>
            <person name="Spradling A.C."/>
            <person name="Stapleton M."/>
            <person name="Strong R."/>
            <person name="Sun E."/>
            <person name="Svirskas R."/>
            <person name="Tector C."/>
            <person name="Turner R."/>
            <person name="Venter E."/>
            <person name="Wang A.H."/>
            <person name="Wang X."/>
            <person name="Wang Z.-Y."/>
            <person name="Wassarman D.A."/>
            <person name="Weinstock G.M."/>
            <person name="Weissenbach J."/>
            <person name="Williams S.M."/>
            <person name="Woodage T."/>
            <person name="Worley K.C."/>
            <person name="Wu D."/>
            <person name="Yang S."/>
            <person name="Yao Q.A."/>
            <person name="Ye J."/>
            <person name="Yeh R.-F."/>
            <person name="Zaveri J.S."/>
            <person name="Zhan M."/>
            <person name="Zhang G."/>
            <person name="Zhao Q."/>
            <person name="Zheng L."/>
            <person name="Zheng X.H."/>
            <person name="Zhong F.N."/>
            <person name="Zhong W."/>
            <person name="Zhou X."/>
            <person name="Zhu S.C."/>
            <person name="Zhu X."/>
            <person name="Smith H.O."/>
            <person name="Gibbs R.A."/>
            <person name="Myers E.W."/>
            <person name="Rubin G.M."/>
            <person name="Venter J.C."/>
        </authorList>
    </citation>
    <scope>NUCLEOTIDE SEQUENCE [LARGE SCALE GENOMIC DNA]</scope>
    <source>
        <strain evidence="8">Berkeley</strain>
    </source>
</reference>
<reference evidence="12" key="2">
    <citation type="journal article" date="2002" name="Genome Biol.">
        <title>Annotation of the Drosophila melanogaster euchromatic genome: a systematic review.</title>
        <authorList>
            <person name="Misra S."/>
            <person name="Crosby M.A."/>
            <person name="Mungall C.J."/>
            <person name="Matthews B.B."/>
            <person name="Campbell K.S."/>
            <person name="Hradecky P."/>
            <person name="Huang Y."/>
            <person name="Kaminker J.S."/>
            <person name="Millburn G.H."/>
            <person name="Prochnik S.E."/>
            <person name="Smith C.D."/>
            <person name="Tupy J.L."/>
            <person name="Whitfield E.J."/>
            <person name="Bayraktaroglu L."/>
            <person name="Berman B.P."/>
            <person name="Bettencourt B.R."/>
            <person name="Celniker S.E."/>
            <person name="de Grey A.D.N.J."/>
            <person name="Drysdale R.A."/>
            <person name="Harris N.L."/>
            <person name="Richter J."/>
            <person name="Russo S."/>
            <person name="Schroeder A.J."/>
            <person name="Shu S.Q."/>
            <person name="Stapleton M."/>
            <person name="Yamada C."/>
            <person name="Ashburner M."/>
            <person name="Gelbart W.M."/>
            <person name="Rubin G.M."/>
            <person name="Lewis S.E."/>
        </authorList>
    </citation>
    <scope>GENOME REANNOTATION</scope>
    <source>
        <strain>Berkeley</strain>
    </source>
</reference>
<reference evidence="12 14" key="3">
    <citation type="journal article" date="2002" name="Genome Biol.">
        <title>A Drosophila full-length cDNA resource.</title>
        <authorList>
            <person name="Stapleton M."/>
            <person name="Carlson J.W."/>
            <person name="Brokstein P."/>
            <person name="Yu C."/>
            <person name="Champe M."/>
            <person name="George R.A."/>
            <person name="Guarin H."/>
            <person name="Kronmiller B."/>
            <person name="Pacleb J.M."/>
            <person name="Park S."/>
            <person name="Wan K.H."/>
            <person name="Rubin G.M."/>
            <person name="Celniker S.E."/>
        </authorList>
    </citation>
    <scope>NUCLEOTIDE SEQUENCE [LARGE SCALE MRNA] (ISOFORM A)</scope>
    <source>
        <strain evidence="9">Berkeley</strain>
        <tissue evidence="9">Testis</tissue>
    </source>
</reference>
<reference evidence="12 13" key="4">
    <citation type="journal article" date="2000" name="Genome Res.">
        <title>Structure of the highly conserved HERC2 gene and of multiple partially duplicated paralogs in human.</title>
        <authorList>
            <person name="Ji Y."/>
            <person name="Rebert N.A."/>
            <person name="Joslin J.M."/>
            <person name="Higgins M.J."/>
            <person name="Schultz R.A."/>
            <person name="Nicholls R.D."/>
        </authorList>
    </citation>
    <scope>NUCLEOTIDE SEQUENCE [MRNA] OF 4170-4912 (ISOFORM B)</scope>
</reference>
<reference key="5">
    <citation type="journal article" date="2008" name="J. Proteome Res.">
        <title>Phosphoproteome analysis of Drosophila melanogaster embryos.</title>
        <authorList>
            <person name="Zhai B."/>
            <person name="Villen J."/>
            <person name="Beausoleil S.A."/>
            <person name="Mintseris J."/>
            <person name="Gygi S.P."/>
        </authorList>
    </citation>
    <scope>PHOSPHORYLATION [LARGE SCALE ANALYSIS] AT THR-1776</scope>
    <scope>IDENTIFICATION BY MASS SPECTROMETRY</scope>
    <source>
        <tissue>Embryo</tissue>
    </source>
</reference>
<name>HERC2_DROME</name>
<proteinExistence type="evidence at protein level"/>
<evidence type="ECO:0000250" key="1"/>
<evidence type="ECO:0000255" key="2"/>
<evidence type="ECO:0000255" key="3">
    <source>
        <dbReference type="PROSITE-ProRule" id="PRU00104"/>
    </source>
</evidence>
<evidence type="ECO:0000255" key="4">
    <source>
        <dbReference type="PROSITE-ProRule" id="PRU00212"/>
    </source>
</evidence>
<evidence type="ECO:0000255" key="5">
    <source>
        <dbReference type="PROSITE-ProRule" id="PRU00614"/>
    </source>
</evidence>
<evidence type="ECO:0000255" key="6">
    <source>
        <dbReference type="PROSITE-ProRule" id="PRU00749"/>
    </source>
</evidence>
<evidence type="ECO:0000256" key="7">
    <source>
        <dbReference type="SAM" id="MobiDB-lite"/>
    </source>
</evidence>
<evidence type="ECO:0000269" key="8">
    <source>
    </source>
</evidence>
<evidence type="ECO:0000269" key="9">
    <source>
    </source>
</evidence>
<evidence type="ECO:0000269" key="10">
    <source>
    </source>
</evidence>
<evidence type="ECO:0000303" key="11">
    <source>
    </source>
</evidence>
<evidence type="ECO:0000305" key="12"/>
<evidence type="ECO:0000312" key="13">
    <source>
        <dbReference type="EMBL" id="AAF61856.1"/>
    </source>
</evidence>
<evidence type="ECO:0000312" key="14">
    <source>
        <dbReference type="EMBL" id="AAM29298.1"/>
    </source>
</evidence>
<dbReference type="EC" id="2.3.2.26"/>
<dbReference type="EMBL" id="AE014298">
    <property type="protein sequence ID" value="AAF50913.3"/>
    <property type="molecule type" value="Genomic_DNA"/>
</dbReference>
<dbReference type="EMBL" id="AY113293">
    <property type="protein sequence ID" value="AAM29298.1"/>
    <property type="molecule type" value="mRNA"/>
</dbReference>
<dbReference type="EMBL" id="AF189221">
    <property type="protein sequence ID" value="AAF61856.1"/>
    <property type="molecule type" value="mRNA"/>
</dbReference>
<dbReference type="RefSeq" id="NP_608388.2">
    <molecule id="Q9VR91-1"/>
    <property type="nucleotide sequence ID" value="NM_134544.3"/>
</dbReference>
<dbReference type="SMR" id="Q9VR91"/>
<dbReference type="BioGRID" id="59326">
    <property type="interactions" value="7"/>
</dbReference>
<dbReference type="FunCoup" id="Q9VR91">
    <property type="interactions" value="1757"/>
</dbReference>
<dbReference type="IntAct" id="Q9VR91">
    <property type="interactions" value="21"/>
</dbReference>
<dbReference type="STRING" id="7227.FBpp0290558"/>
<dbReference type="GlyGen" id="Q9VR91">
    <property type="glycosylation" value="1 site"/>
</dbReference>
<dbReference type="iPTMnet" id="Q9VR91"/>
<dbReference type="PaxDb" id="7227-FBpp0290558"/>
<dbReference type="EnsemblMetazoa" id="FBtr0301344">
    <molecule id="Q9VR91-1"/>
    <property type="protein sequence ID" value="FBpp0290558"/>
    <property type="gene ID" value="FBgn0031107"/>
</dbReference>
<dbReference type="GeneID" id="33035"/>
<dbReference type="KEGG" id="dme:Dmel_CG11734"/>
<dbReference type="UCSC" id="CG11734-RB">
    <molecule id="Q9VR91-1"/>
    <property type="organism name" value="d. melanogaster"/>
</dbReference>
<dbReference type="AGR" id="FB:FBgn0031107"/>
<dbReference type="CTD" id="8924"/>
<dbReference type="FlyBase" id="FBgn0031107">
    <property type="gene designation" value="HERC2"/>
</dbReference>
<dbReference type="VEuPathDB" id="VectorBase:FBgn0031107"/>
<dbReference type="eggNOG" id="KOG0939">
    <property type="taxonomic scope" value="Eukaryota"/>
</dbReference>
<dbReference type="eggNOG" id="KOG1426">
    <property type="taxonomic scope" value="Eukaryota"/>
</dbReference>
<dbReference type="GeneTree" id="ENSGT00940000154975"/>
<dbReference type="HOGENOM" id="CLU_000101_0_0_1"/>
<dbReference type="InParanoid" id="Q9VR91"/>
<dbReference type="OMA" id="WRNHGST"/>
<dbReference type="OrthoDB" id="239701at2759"/>
<dbReference type="PhylomeDB" id="Q9VR91"/>
<dbReference type="Reactome" id="R-DME-5693565">
    <property type="pathway name" value="Recruitment and ATM-mediated phosphorylation of repair and signaling proteins at DNA double strand breaks"/>
</dbReference>
<dbReference type="Reactome" id="R-DME-983168">
    <property type="pathway name" value="Antigen processing: Ubiquitination &amp; Proteasome degradation"/>
</dbReference>
<dbReference type="SignaLink" id="Q9VR91"/>
<dbReference type="UniPathway" id="UPA00143"/>
<dbReference type="BioGRID-ORCS" id="33035">
    <property type="hits" value="0 hits in 3 CRISPR screens"/>
</dbReference>
<dbReference type="GenomeRNAi" id="33035"/>
<dbReference type="PRO" id="PR:Q9VR91"/>
<dbReference type="Proteomes" id="UP000000803">
    <property type="component" value="Chromosome X"/>
</dbReference>
<dbReference type="Bgee" id="FBgn0031107">
    <property type="expression patterns" value="Expressed in outer photoreceptor cell (Drosophila) in insect head and 124 other cell types or tissues"/>
</dbReference>
<dbReference type="ExpressionAtlas" id="Q9VR91">
    <property type="expression patterns" value="baseline and differential"/>
</dbReference>
<dbReference type="GO" id="GO:0005814">
    <property type="term" value="C:centriole"/>
    <property type="evidence" value="ECO:0007669"/>
    <property type="project" value="UniProtKB-SubCell"/>
</dbReference>
<dbReference type="GO" id="GO:0005737">
    <property type="term" value="C:cytoplasm"/>
    <property type="evidence" value="ECO:0000250"/>
    <property type="project" value="FlyBase"/>
</dbReference>
<dbReference type="GO" id="GO:0016020">
    <property type="term" value="C:membrane"/>
    <property type="evidence" value="ECO:0000318"/>
    <property type="project" value="GO_Central"/>
</dbReference>
<dbReference type="GO" id="GO:0005634">
    <property type="term" value="C:nucleus"/>
    <property type="evidence" value="ECO:0000250"/>
    <property type="project" value="FlyBase"/>
</dbReference>
<dbReference type="GO" id="GO:0046872">
    <property type="term" value="F:metal ion binding"/>
    <property type="evidence" value="ECO:0007669"/>
    <property type="project" value="InterPro"/>
</dbReference>
<dbReference type="GO" id="GO:0061630">
    <property type="term" value="F:ubiquitin protein ligase activity"/>
    <property type="evidence" value="ECO:0000250"/>
    <property type="project" value="FlyBase"/>
</dbReference>
<dbReference type="GO" id="GO:0004842">
    <property type="term" value="F:ubiquitin-protein transferase activity"/>
    <property type="evidence" value="ECO:0000250"/>
    <property type="project" value="FlyBase"/>
</dbReference>
<dbReference type="GO" id="GO:0016567">
    <property type="term" value="P:protein ubiquitination"/>
    <property type="evidence" value="ECO:0000250"/>
    <property type="project" value="FlyBase"/>
</dbReference>
<dbReference type="GO" id="GO:0009966">
    <property type="term" value="P:regulation of signal transduction"/>
    <property type="evidence" value="ECO:0007669"/>
    <property type="project" value="UniProtKB-ARBA"/>
</dbReference>
<dbReference type="CDD" id="cd08664">
    <property type="entry name" value="APC10-HERC2"/>
    <property type="match status" value="1"/>
</dbReference>
<dbReference type="CDD" id="cd00078">
    <property type="entry name" value="HECTc"/>
    <property type="match status" value="1"/>
</dbReference>
<dbReference type="CDD" id="cd14402">
    <property type="entry name" value="UBA_HERC2"/>
    <property type="match status" value="1"/>
</dbReference>
<dbReference type="FunFam" id="2.30.30.30:FF:000015">
    <property type="entry name" value="E3 ubiquitin-protein ligase HERC2"/>
    <property type="match status" value="1"/>
</dbReference>
<dbReference type="FunFam" id="2.130.10.30:FF:000003">
    <property type="entry name" value="E3 ubiquitin-protein ligase HERC2 isoform X1"/>
    <property type="match status" value="1"/>
</dbReference>
<dbReference type="FunFam" id="2.130.10.30:FF:000006">
    <property type="entry name" value="E3 ubiquitin-protein ligase HERC2 isoform X1"/>
    <property type="match status" value="1"/>
</dbReference>
<dbReference type="FunFam" id="2.30.30.40:FF:000074">
    <property type="entry name" value="E3 ubiquitin-protein ligase HERC2 isoform X1"/>
    <property type="match status" value="1"/>
</dbReference>
<dbReference type="FunFam" id="2.130.10.30:FF:000004">
    <property type="entry name" value="E3 ubiquitin-protein ligase HERC2 isoform X2"/>
    <property type="match status" value="1"/>
</dbReference>
<dbReference type="FunFam" id="3.30.2160.10:FF:000010">
    <property type="entry name" value="E3 ubiquitin-protein ligase HERC2 isoform X2"/>
    <property type="match status" value="1"/>
</dbReference>
<dbReference type="FunFam" id="3.30.2410.10:FF:000006">
    <property type="entry name" value="probable E3 ubiquitin-protein ligase HERC1 isoform X2"/>
    <property type="match status" value="1"/>
</dbReference>
<dbReference type="Gene3D" id="2.30.30.30">
    <property type="match status" value="1"/>
</dbReference>
<dbReference type="Gene3D" id="1.10.8.10">
    <property type="entry name" value="DNA helicase RuvA subunit, C-terminal domain"/>
    <property type="match status" value="1"/>
</dbReference>
<dbReference type="Gene3D" id="2.60.120.260">
    <property type="entry name" value="Galactose-binding domain-like"/>
    <property type="match status" value="1"/>
</dbReference>
<dbReference type="Gene3D" id="3.30.2160.10">
    <property type="entry name" value="Hect, E3 ligase catalytic domain"/>
    <property type="match status" value="1"/>
</dbReference>
<dbReference type="Gene3D" id="3.30.2410.10">
    <property type="entry name" value="Hect, E3 ligase catalytic domain"/>
    <property type="match status" value="1"/>
</dbReference>
<dbReference type="Gene3D" id="3.90.1750.10">
    <property type="entry name" value="Hect, E3 ligase catalytic domains"/>
    <property type="match status" value="1"/>
</dbReference>
<dbReference type="Gene3D" id="2.130.10.30">
    <property type="entry name" value="Regulator of chromosome condensation 1/beta-lactamase-inhibitor protein II"/>
    <property type="match status" value="3"/>
</dbReference>
<dbReference type="Gene3D" id="2.30.30.40">
    <property type="entry name" value="SH3 Domains"/>
    <property type="match status" value="1"/>
</dbReference>
<dbReference type="InterPro" id="IPR004939">
    <property type="entry name" value="APC_su10/DOC_dom"/>
</dbReference>
<dbReference type="InterPro" id="IPR021097">
    <property type="entry name" value="CPH_domain"/>
</dbReference>
<dbReference type="InterPro" id="IPR001199">
    <property type="entry name" value="Cyt_B5-like_heme/steroid-bd"/>
</dbReference>
<dbReference type="InterPro" id="IPR008979">
    <property type="entry name" value="Galactose-bd-like_sf"/>
</dbReference>
<dbReference type="InterPro" id="IPR000569">
    <property type="entry name" value="HECT_dom"/>
</dbReference>
<dbReference type="InterPro" id="IPR035983">
    <property type="entry name" value="Hect_E3_ubiquitin_ligase"/>
</dbReference>
<dbReference type="InterPro" id="IPR037976">
    <property type="entry name" value="HERC2_APC10"/>
</dbReference>
<dbReference type="InterPro" id="IPR010606">
    <property type="entry name" value="Mib_Herc2"/>
</dbReference>
<dbReference type="InterPro" id="IPR037252">
    <property type="entry name" value="Mib_Herc2_sf"/>
</dbReference>
<dbReference type="InterPro" id="IPR009091">
    <property type="entry name" value="RCC1/BLIP-II"/>
</dbReference>
<dbReference type="InterPro" id="IPR000408">
    <property type="entry name" value="Reg_chr_condens"/>
</dbReference>
<dbReference type="InterPro" id="IPR014722">
    <property type="entry name" value="Rib_uL2_dom2"/>
</dbReference>
<dbReference type="InterPro" id="IPR051625">
    <property type="entry name" value="Signaling_Regulatory_Domain"/>
</dbReference>
<dbReference type="InterPro" id="IPR015940">
    <property type="entry name" value="UBA"/>
</dbReference>
<dbReference type="InterPro" id="IPR009060">
    <property type="entry name" value="UBA-like_sf"/>
</dbReference>
<dbReference type="PANTHER" id="PTHR22872">
    <property type="entry name" value="BTK-BINDING PROTEIN-RELATED"/>
    <property type="match status" value="1"/>
</dbReference>
<dbReference type="PANTHER" id="PTHR22872:SF2">
    <property type="entry name" value="INHIBITOR OF BRUTON TYROSINE KINASE"/>
    <property type="match status" value="1"/>
</dbReference>
<dbReference type="Pfam" id="PF11515">
    <property type="entry name" value="Cul7"/>
    <property type="match status" value="1"/>
</dbReference>
<dbReference type="Pfam" id="PF00173">
    <property type="entry name" value="Cyt-b5"/>
    <property type="match status" value="1"/>
</dbReference>
<dbReference type="Pfam" id="PF00632">
    <property type="entry name" value="HECT"/>
    <property type="match status" value="1"/>
</dbReference>
<dbReference type="Pfam" id="PF06701">
    <property type="entry name" value="MIB_HERC2"/>
    <property type="match status" value="1"/>
</dbReference>
<dbReference type="Pfam" id="PF00415">
    <property type="entry name" value="RCC1"/>
    <property type="match status" value="4"/>
</dbReference>
<dbReference type="Pfam" id="PF25390">
    <property type="entry name" value="WD40_RLD"/>
    <property type="match status" value="2"/>
</dbReference>
<dbReference type="PRINTS" id="PR00633">
    <property type="entry name" value="RCCNDNSATION"/>
</dbReference>
<dbReference type="SMART" id="SM01337">
    <property type="entry name" value="APC10"/>
    <property type="match status" value="1"/>
</dbReference>
<dbReference type="SMART" id="SM00119">
    <property type="entry name" value="HECTc"/>
    <property type="match status" value="1"/>
</dbReference>
<dbReference type="SUPFAM" id="SSF49785">
    <property type="entry name" value="Galactose-binding domain-like"/>
    <property type="match status" value="1"/>
</dbReference>
<dbReference type="SUPFAM" id="SSF56204">
    <property type="entry name" value="Hect, E3 ligase catalytic domain"/>
    <property type="match status" value="1"/>
</dbReference>
<dbReference type="SUPFAM" id="SSF159034">
    <property type="entry name" value="Mib/herc2 domain-like"/>
    <property type="match status" value="1"/>
</dbReference>
<dbReference type="SUPFAM" id="SSF50985">
    <property type="entry name" value="RCC1/BLIP-II"/>
    <property type="match status" value="3"/>
</dbReference>
<dbReference type="SUPFAM" id="SSF63748">
    <property type="entry name" value="Tudor/PWWP/MBT"/>
    <property type="match status" value="1"/>
</dbReference>
<dbReference type="SUPFAM" id="SSF46934">
    <property type="entry name" value="UBA-like"/>
    <property type="match status" value="1"/>
</dbReference>
<dbReference type="PROSITE" id="PS51284">
    <property type="entry name" value="DOC"/>
    <property type="match status" value="1"/>
</dbReference>
<dbReference type="PROSITE" id="PS50237">
    <property type="entry name" value="HECT"/>
    <property type="match status" value="1"/>
</dbReference>
<dbReference type="PROSITE" id="PS51416">
    <property type="entry name" value="MIB_HERC2"/>
    <property type="match status" value="1"/>
</dbReference>
<dbReference type="PROSITE" id="PS00626">
    <property type="entry name" value="RCC1_2"/>
    <property type="match status" value="1"/>
</dbReference>
<dbReference type="PROSITE" id="PS50012">
    <property type="entry name" value="RCC1_3"/>
    <property type="match status" value="18"/>
</dbReference>
<dbReference type="PROSITE" id="PS50030">
    <property type="entry name" value="UBA"/>
    <property type="match status" value="1"/>
</dbReference>
<sequence length="4912" mass="529997">MFNRQASGGAGSSGQGAGSSQTASAAPVSAGVGVGGGGGASGAAAGAGSAAGSGSGSGSGSAAPPSHSPDLYLRPLPFLDAKWLRADLIASLRNAADGAVLWNHLIQDCELVSSPTAPLLNARGQLSYLGDDGKHYCGAQQLKCSCCQPEYCGPLSACNCDGCRPLDSDTAIKKLTTQAAAQQAAHLSQATDMVLSGWLWSQPPSQQARLDCQRSMISELQELALRAAGNCLSAQHLRQQLFIYERYFVALKRERERERKSTTSAQAVASVTTANTTIAATTANAAVESQPAEQQAEHGALGLARVATHAALNFSFAFLRRAWRSGEDTEMCSELLSEALASLQELPEATLFEAAVVSSLWLEVMERSIKFLRLVALGDPMGNRCTAPLNDRHTALCLLLELGVQKGTLAATLECVVLLLLLWEKDRAGNDNRDMPRKTGAPLQRILLRYQKIGATAKGGGIAGGEPAPVASATETFLRFLSLPKSSAAIVDLRRAAVVIISHLDRMVQPLMPRCLLRGGQATAASSSSAPQQRIYALGWPSLSKDQQGFSAEPTLSWSGESAGVPTLSCRFQIKQVACCETQMLILSQEGKLYTWRLAKPEAEPLPMEEVAHDVFISIAGHCEGRHFLAIDSNHNAYSWGTGEDHRLGHGDTHARAVPTKIAALEQHCVQSVYCGCSYSAAITCGGNLLTWGRGTYARLGHGNSDDRSLPTLVVALSDHMVVDVALGSGDAHSLALTSEGLVFAWGDGDYGKLGNGNCNGSLQPILVESLPRVQRVFAGSQFSVALSSEGQLYTWGKATCLGHQLVERSVQGCSVPRLVSSLQHKRIVDVAVSVAHCLALSSSGEVFGWGRNDSQQICPASVSSEPLLRTPILVSLPTFPASGIACTSAQSLVWTQSSHQGVPRRAPFVVDLGEPTFRLLDQLLGMCSSQDNRQTPNQESECIAVACLNLFRLQLLALIANGVEPRQVGLASGSRLLCSLKTRILGLAGGSQVLRTIQVAAQQALQDGWSVLLPTAAERAQTLTSLLPSEPGQASSAGHRFMTDLLVSSLMAEGGLESALQHAIRLESSSCSADCGDGVHLPLLQLITRLLSNNAALSQTRLSPTLGKQQEKEEEEREQQHQEPSTSPSLSLLHRFQRLLLSHIHQAQPEEETTGAEALLLQYMHALIPACVATLQKAHELALQCREPGENSFGQMVGHLGRVLQADISDALLNELLVGLLLLKRDRPQCLGGLRWARLFLPLLRVLDRLNRALGEGELRDGDDMGWPGIICRGGPKGGPPPADPETHYVRRADMENLLLDGSRCIILAGYVCDLSGYNCESETLRSVLDSGLGKDLTAEMSSQVHRTAMEHILEHHKLGKYMVQASTEEKSSAPGPSRLTHFSSECALAQLLGLVANLMCSGPALQPAELQCRQLDKSSLLSGGLQLLQPSNPFDEEKGEARSSHSCHSTAGNTPTELPPPLPMQQQLAPGRGKSQLQLRADAFISGLAEARVSEPPVAAWLALTERYCKAHNLMWHQEFATEHPVQELERLLSAVLIRHQYLGGLVLNALETEVPPPRQLGEIIRLVHQAKWSVVRTRQQLNRSYKEVCAPILERLRFLLYEVRPAISPQQRGLRRLPILQRPPRFKMLVRRLLQELRSSRQPAKPEDLLNASIQQEQEKKPQSMPKQELEEQEEEETLLRRLNERQIHGEGELDPALMQDIVDFALQDSCDVETARRAMYCQMQRYQLRLAGLQIVQQLLELHGLLDAAQYSLLNGFLGLHLKSTSSGGGSTGSGSSLHVLGQLNMISAYQKARLLLAQSRVLDWAVRELRRLVNQEQQGHARGKDSTNLGTYVLLKRLPRARFLLSVFGLLAKELGPNELGFLINSGLLGTVLGLLAQTGGEGATGGQVHGELSILYEDSVLKQKSSKAQLSGPDLAKLMKIGTRIVRGADWKWGDQDGNPPGEGRIISEVGEDGWVRVEWYTGATNSYRMGKEGQYDLQLADSALNVASPTEPEREDVSGSEASPTSDSHPSKLLRHCAAKLLQILAVGTGLHGAQLDKDALRGMTSMFRTIIYPKPSMSNISYALGWLNLGFIRAISGDCPRLCLELSTPGWLSHYLSLLEQPAGNEAGVYRQLHCLRLLQLILAQWGAEEEPRMPALVHQLFATLGRIALHCPGDASLLPTAEGKARVLLTASHSGSVAEELVALLRRLHTLPSWNPVINSFLAQKLCVAAELLAEQSHSTALDSEQVFVLGVLGAMGGHDLRPRVGLHCFHEGSHMVIASFTPKGRCLLAPGGVGSGVGFVKVQLPAVMPHLDHTVFSLSRLPMNEMLLNAWTVLLYGPAPELRELPSSADGRLDLALLRAQQLQMAVLHTNGVLYRHQVALRRILKQRAPGSIYASPDEPDRSDAESQQPGEQDQQLSSGSGQEPQLLIQCILLRATQASPVKACYSYMDLATAALNCIQSLATQAHQELSEGGGVPPNGRALSSPPQPTMVHGVPVYNVARKEQKPSEQVEQKSKWPAAATDAQLIGQIMEMGFTRRTVELALKQLSLQAEIMPTPEQIVQWILEHPDVCANTIEEDTLPLASSASSHDPEADSDNECPSSNSTTSSSTSSDTVEGQPMAVSGPAPPVKFESRKDFQTADLYALYVRGLVRPGMTVRCCRDFEEIKQGDMGTVLIVDTEGLHDLNVQVDWRNHGSTYWVCFVHIELVEAAQTHHQPRPPPIAVGARVRLRTSSLRYGMLCPLRLGRSQGSSAIGVVSSVRSKQLTVDFPDQPAWQGHINEVELVASQPTSATLPSLGDSCSQMPPSDLIEDWSRCIRSLTVSSNEAAAKHLLNGSNQPWQSCSSGPCRHWIRLELHDRILVHSLTLKVSPEDHSHMPSLLEIRVGDCVDSLKEYTWIPVPAGASRVLLMQQVPTYYPWVEVVVKQCQNNGIQCKIHGIKFVGRRQQPDLQHILANAQFLASEYSAGVGPGSTAGAGAVSTSHEEAAAAPEQDLPCTVMVWGLNDKEQLGGLKGSKVKVPTFSQTISRLRPIHIAGGSKSLFIVSQDGKVYACGEGTNGRLGLGVTHNVPLPHQLPVLRQYVVKKVAVHSGGKHALALTLDGKVFSWGEGEDGKLGHGNRTTLDKPRLVEALRAKKIRDVACGSSHSAAISSQGELYTWGLGEYGRLGHGDNTTQLKPKLVTALAGRRVVQVACGSRDAQTLALTEDGAVFSWGDGDFGKLGRGGSEGSDTPHEIERLSGIGVVQIECGAQFSLALTRAGEVWTWGKGDYYRLGHGGDQHVRKPQPIGGLRGRRVIHVAVGALHCLAVTDAGQVYAWGDNDHGQQGSGNTFVNKKPALVIGLDAVFVNRVACGSSHSIAWGLPNASSDEEKRGPVPFSSTRDPLGGSSLGIYEAETMQTLKQEAKPLNQSSLSESLALETPAARQAALGHVLRAMSILQARQLIVAALTSHSKVNFKERGAVGGEEDHLIGGPIMGAPLQLAETIAQGGGEAPADATDAGLQEHSPEAAVDALTGGMSGGANTLPPLSAGPLSAFQSLTGSLSMSGSLSSSALPQHKHSRMSASAMSVMAATMTQQEEMLSHISHCHGLDDFGGLLGEPEAKSLVELLKLAVCGRCGPPSTSQTIADTLISLGAGTPAVAAMLLETCITELEDLCTSRHCLGKLPKPVMQESSHPYVDNVNVTGVVRIPGAEMLRLEFDSQCSTEKRNDPLVIMDGTGRVLAMRSGREFAHWAPEIRVLGDELRWKFSSDSSVNGWGWRFWVHAIMPAATLGESGSDRAVLSQPSMALVMSLLDSRLAPRQPSVLLRLASALAACSQLGALTTAQRIWSLRKLHAVLLLEQAPRPQDPSLSTLLQPLIPELLRQYEYEEPQVRGGIHLMHSDYFKTLAALACDMQLDAALPATSSSSSSSAAPGAISSTGDVHKWAWFKRYCIAVRVAQSLIRRTELPRAFCLEVRKKFAEMLPSSSSNSNANPGCQSPGASMLNSTTSLSSSTVSNVSPPPGITGEQPDLHCHAHQLESTSTLLHEDHTLFQAPHDAQLLQWLNRRPDDWALSWGGASTIYGWGHNHRGQLGGLEGSRIKTPTPCEALSLLRPVQLAGGEQSLFAVTPDGKLFATGYGSGGRLGVGGSDSWAIPTLLGSLQHVFVKKVAVNSGGKHCLALTTEGEVYAWGEGEDGKLGHGNRMSYDRPKLVEHLNGMSVADIACGSAHSAAITASGHVLTWGKGRYGRLGHGDSEDQLRPKLVEALLGYRAIDIACGSGDAQTLCITDDDNVWSWGDGDYGKLGRGGSDGCKLPYKIESLAGLGVVKVECGSQFSVALTKSGAVYTWGKGDFHRLGHGSVDHVRRPKKVAALQGKKIISIATGSLHCVACSDSGEVYTWGDNDEGQLGDGTVTAIQRPRLVAALQGKHIVKVTCGSAHTLALSTSQLSERLRPLPNPPLEYDLVRDLAPEALHARLILLHHFSELVCPCLAMLPISGDLSLGALKDVLVYNIKEAAFRKVIQTTMVRDKQHGPVIELNRIQVKRSRNRCNGLAGIDGMKSVFGQMVQKLPLLTQEALALPHRVWKVKFVGESVDDCGGGYSESIAEMCDELQNGSVPLLINTPNGRGEAGANRDCFLLDPTLSSVLQMNMFRFLGVLMGIAVRTGSPLSINLAEPVWRQLTGEVLRPTDLTEVDRDYVAGLLCIRNMDDDPKLFTALELPFSTSSARGHEVPLSTRYTHISPRNRAEYVRLALGFRLHEFDEQVKAVRDGMSKVIPVPLLSLFSAAELQAMVCGSPDIPLGLLKSVATYKGFDPSSALVTWFWEVMEEFTNQERSLFLRFVWGRTRLPRTIADFRGRDFVLQVLEKNPPDHFLPESYTCFFLLKMPRYSCKAVLLEKLKYAIHFCKSIDTDEYARVAMGEPTEATGSEDNSDLESVASHEG</sequence>
<keyword id="KW-0025">Alternative splicing</keyword>
<keyword id="KW-0963">Cytoplasm</keyword>
<keyword id="KW-0206">Cytoskeleton</keyword>
<keyword id="KW-0597">Phosphoprotein</keyword>
<keyword id="KW-1185">Reference proteome</keyword>
<keyword id="KW-0677">Repeat</keyword>
<keyword id="KW-0808">Transferase</keyword>
<keyword id="KW-0833">Ubl conjugation pathway</keyword>
<feature type="chain" id="PRO_0000229741" description="Probable E3 ubiquitin-protein ligase HERC2">
    <location>
        <begin position="1"/>
        <end position="4912"/>
    </location>
</feature>
<feature type="repeat" description="RCC1 1" evidence="2">
    <location>
        <begin position="634"/>
        <end position="685"/>
    </location>
</feature>
<feature type="repeat" description="RCC1 2" evidence="2">
    <location>
        <begin position="686"/>
        <end position="739"/>
    </location>
</feature>
<feature type="repeat" description="RCC1 3" evidence="2">
    <location>
        <begin position="741"/>
        <end position="789"/>
    </location>
</feature>
<feature type="repeat" description="RCC1 4" evidence="2">
    <location>
        <begin position="791"/>
        <end position="843"/>
    </location>
</feature>
<feature type="repeat" description="RCC1 5" evidence="2">
    <location>
        <begin position="844"/>
        <end position="897"/>
    </location>
</feature>
<feature type="domain" description="MIB/HERC2" evidence="6">
    <location>
        <begin position="1917"/>
        <end position="1990"/>
    </location>
</feature>
<feature type="domain" description="UBA" evidence="4">
    <location>
        <begin position="2511"/>
        <end position="2557"/>
    </location>
</feature>
<feature type="domain" description="CPH" evidence="2">
    <location>
        <begin position="2624"/>
        <end position="2699"/>
    </location>
</feature>
<feature type="domain" description="DOC" evidence="5">
    <location>
        <begin position="2780"/>
        <end position="2958"/>
    </location>
</feature>
<feature type="repeat" description="RCC1 6" evidence="2">
    <location>
        <begin position="2985"/>
        <end position="3036"/>
    </location>
</feature>
<feature type="repeat" description="RCC1 7" evidence="2">
    <location>
        <begin position="3037"/>
        <end position="3090"/>
    </location>
</feature>
<feature type="repeat" description="RCC1 8" evidence="2">
    <location>
        <begin position="3091"/>
        <end position="3142"/>
    </location>
</feature>
<feature type="repeat" description="RCC1 9" evidence="2">
    <location>
        <begin position="3144"/>
        <end position="3194"/>
    </location>
</feature>
<feature type="repeat" description="RCC1 10" evidence="2">
    <location>
        <begin position="3197"/>
        <end position="3248"/>
    </location>
</feature>
<feature type="repeat" description="RCC1 11" evidence="2">
    <location>
        <begin position="3250"/>
        <end position="3300"/>
    </location>
</feature>
<feature type="repeat" description="RCC1 12" evidence="2">
    <location>
        <begin position="3302"/>
        <end position="3352"/>
    </location>
</feature>
<feature type="repeat" description="RCC1 13" evidence="2">
    <location>
        <begin position="4049"/>
        <end position="4099"/>
    </location>
</feature>
<feature type="repeat" description="RCC1 14" evidence="2">
    <location>
        <begin position="4101"/>
        <end position="4153"/>
    </location>
</feature>
<feature type="repeat" description="RCC1 15" evidence="2">
    <location>
        <begin position="4155"/>
        <end position="4205"/>
    </location>
</feature>
<feature type="repeat" description="RCC1 16" evidence="2">
    <location>
        <begin position="4207"/>
        <end position="4259"/>
    </location>
</feature>
<feature type="repeat" description="RCC1 17" evidence="2">
    <location>
        <begin position="4261"/>
        <end position="4311"/>
    </location>
</feature>
<feature type="repeat" description="RCC1 18" evidence="2">
    <location>
        <begin position="4313"/>
        <end position="4363"/>
    </location>
</feature>
<feature type="repeat" description="RCC1 19" evidence="2">
    <location>
        <begin position="4365"/>
        <end position="4415"/>
    </location>
</feature>
<feature type="domain" description="HECT" evidence="3">
    <location>
        <begin position="4547"/>
        <end position="4882"/>
    </location>
</feature>
<feature type="region of interest" description="Disordered" evidence="7">
    <location>
        <begin position="1"/>
        <end position="67"/>
    </location>
</feature>
<feature type="region of interest" description="Disordered" evidence="7">
    <location>
        <begin position="1102"/>
        <end position="1129"/>
    </location>
</feature>
<feature type="region of interest" description="Disordered" evidence="7">
    <location>
        <begin position="1428"/>
        <end position="1475"/>
    </location>
</feature>
<feature type="region of interest" description="Disordered" evidence="7">
    <location>
        <begin position="1659"/>
        <end position="1681"/>
    </location>
</feature>
<feature type="region of interest" description="Disordered" evidence="7">
    <location>
        <begin position="1994"/>
        <end position="2018"/>
    </location>
</feature>
<feature type="region of interest" description="Disordered" evidence="7">
    <location>
        <begin position="2381"/>
        <end position="2412"/>
    </location>
</feature>
<feature type="region of interest" description="Disordered" evidence="7">
    <location>
        <begin position="2572"/>
        <end position="2620"/>
    </location>
</feature>
<feature type="region of interest" description="Disordered" evidence="7">
    <location>
        <begin position="3352"/>
        <end position="3374"/>
    </location>
</feature>
<feature type="region of interest" description="Disordered" evidence="7">
    <location>
        <begin position="3953"/>
        <end position="4000"/>
    </location>
</feature>
<feature type="region of interest" description="Disordered" evidence="7">
    <location>
        <begin position="4891"/>
        <end position="4912"/>
    </location>
</feature>
<feature type="compositionally biased region" description="Gly residues" evidence="7">
    <location>
        <begin position="8"/>
        <end position="17"/>
    </location>
</feature>
<feature type="compositionally biased region" description="Low complexity" evidence="7">
    <location>
        <begin position="18"/>
        <end position="31"/>
    </location>
</feature>
<feature type="compositionally biased region" description="Gly residues" evidence="7">
    <location>
        <begin position="32"/>
        <end position="41"/>
    </location>
</feature>
<feature type="compositionally biased region" description="Gly residues" evidence="7">
    <location>
        <begin position="49"/>
        <end position="59"/>
    </location>
</feature>
<feature type="compositionally biased region" description="Polar residues" evidence="7">
    <location>
        <begin position="1446"/>
        <end position="1458"/>
    </location>
</feature>
<feature type="compositionally biased region" description="Polar residues" evidence="7">
    <location>
        <begin position="2396"/>
        <end position="2412"/>
    </location>
</feature>
<feature type="compositionally biased region" description="Low complexity" evidence="7">
    <location>
        <begin position="2591"/>
        <end position="2604"/>
    </location>
</feature>
<feature type="compositionally biased region" description="Low complexity" evidence="7">
    <location>
        <begin position="3974"/>
        <end position="3988"/>
    </location>
</feature>
<feature type="active site" description="Glycyl thioester intermediate" evidence="3">
    <location>
        <position position="4850"/>
    </location>
</feature>
<feature type="modified residue" description="Phosphothreonine" evidence="10">
    <location>
        <position position="1776"/>
    </location>
</feature>
<feature type="splice variant" id="VSP_051976" description="In isoform A." evidence="11">
    <original>HN</original>
    <variation>RK</variation>
    <location>
        <begin position="635"/>
        <end position="636"/>
    </location>
</feature>
<feature type="splice variant" id="VSP_051977" description="In isoform A." evidence="11">
    <location>
        <begin position="637"/>
        <end position="4912"/>
    </location>
</feature>
<feature type="sequence conflict" description="In Ref. 4; AAF61856." evidence="12" ref="4">
    <original>R</original>
    <variation>W</variation>
    <location>
        <position position="4388"/>
    </location>
</feature>
<feature type="sequence conflict" description="In Ref. 4; AAF61856." evidence="12" ref="4">
    <original>A</original>
    <variation>T</variation>
    <location>
        <position position="4393"/>
    </location>
</feature>
<feature type="sequence conflict" description="In Ref. 4; AAF61856." evidence="12" ref="4">
    <original>Y</original>
    <variation>C</variation>
    <location>
        <position position="4481"/>
    </location>
</feature>
<feature type="sequence conflict" description="In Ref. 4; AAF61856." evidence="12" ref="4">
    <original>I</original>
    <variation>T</variation>
    <location>
        <position position="4575"/>
    </location>
</feature>
<feature type="sequence conflict" description="In Ref. 4; AAF61856." evidence="12" ref="4">
    <original>T</original>
    <variation>M</variation>
    <location>
        <position position="4652"/>
    </location>
</feature>
<gene>
    <name type="primary">HERC2</name>
    <name type="ORF">CG11734</name>
</gene>
<accession>Q9VR91</accession>
<accession>Q8MZ96</accession>
<accession>Q9N2R1</accession>
<protein>
    <recommendedName>
        <fullName>Probable E3 ubiquitin-protein ligase HERC2</fullName>
        <ecNumber>2.3.2.26</ecNumber>
    </recommendedName>
    <alternativeName>
        <fullName>HECT domain and RCC1-like domain-containing protein 2</fullName>
    </alternativeName>
    <alternativeName>
        <fullName>HECT-type E3 ubiquitin transferase HERC2</fullName>
    </alternativeName>
</protein>